<gene>
    <name type="primary">MT-CYB</name>
    <name type="synonym">COB</name>
    <name type="synonym">CYTB</name>
    <name type="synonym">MTCYB</name>
</gene>
<accession>O21205</accession>
<proteinExistence type="inferred from homology"/>
<sequence>MAPNIRKSHPLLKMVNNSLIDLPTPSNISAWWNFGSLLGICLMTQILTGLLLAMHYTADTNLAFSSVSHTCRNVQYGWLIRNLHANGASLFFICIYLHIGRGIYYGSYLYKETWNTGIILLLTLMATAFVGYVLPWGQMSFWGATVITNLFSAIPYIGQTLVEWAWGGFSVDNPTLTRFFALHFLLPFLIAGLTLIHLTFLHESGSNNPLGITSNCDKIPFHPYFSSKDILGFMLLYFLLTTLALLSPNLLGDPENFTPANPLVTPPHIKPEWYFLFAYAILRSIPNKLGGVLALAASILILFLSPFLHKSKQRTMTFRPLSQALFWLLVTNLFILTWIGSQPVEHPFIIIGQLASLSYFTILLILLPLTGALENKILNY</sequence>
<name>CYB_PHAAS</name>
<comment type="function">
    <text evidence="2">Component of the ubiquinol-cytochrome c reductase complex (complex III or cytochrome b-c1 complex) that is part of the mitochondrial respiratory chain. The b-c1 complex mediates electron transfer from ubiquinol to cytochrome c. Contributes to the generation of a proton gradient across the mitochondrial membrane that is then used for ATP synthesis.</text>
</comment>
<comment type="cofactor">
    <cofactor evidence="2">
        <name>heme b</name>
        <dbReference type="ChEBI" id="CHEBI:60344"/>
    </cofactor>
    <text evidence="2">Binds 2 heme b groups non-covalently.</text>
</comment>
<comment type="subunit">
    <text evidence="2">The cytochrome bc1 complex contains 11 subunits: 3 respiratory subunits (MT-CYB, CYC1 and UQCRFS1), 2 core proteins (UQCRC1 and UQCRC2) and 6 low-molecular weight proteins (UQCRH/QCR6, UQCRB/QCR7, UQCRQ/QCR8, UQCR10/QCR9, UQCR11/QCR10 and a cleavage product of UQCRFS1). This cytochrome bc1 complex then forms a dimer.</text>
</comment>
<comment type="subcellular location">
    <subcellularLocation>
        <location evidence="2">Mitochondrion inner membrane</location>
        <topology evidence="2">Multi-pass membrane protein</topology>
    </subcellularLocation>
</comment>
<comment type="miscellaneous">
    <text evidence="1">Heme 1 (or BL or b562) is low-potential and absorbs at about 562 nm, and heme 2 (or BH or b566) is high-potential and absorbs at about 566 nm.</text>
</comment>
<comment type="similarity">
    <text evidence="3 4">Belongs to the cytochrome b family.</text>
</comment>
<comment type="caution">
    <text evidence="2">The full-length protein contains only eight transmembrane helices, not nine as predicted by bioinformatics tools.</text>
</comment>
<organism>
    <name type="scientific">Phalcoboenus australis</name>
    <name type="common">Striated caracara</name>
    <dbReference type="NCBI Taxonomy" id="56345"/>
    <lineage>
        <taxon>Eukaryota</taxon>
        <taxon>Metazoa</taxon>
        <taxon>Chordata</taxon>
        <taxon>Craniata</taxon>
        <taxon>Vertebrata</taxon>
        <taxon>Euteleostomi</taxon>
        <taxon>Archelosauria</taxon>
        <taxon>Archosauria</taxon>
        <taxon>Dinosauria</taxon>
        <taxon>Saurischia</taxon>
        <taxon>Theropoda</taxon>
        <taxon>Coelurosauria</taxon>
        <taxon>Aves</taxon>
        <taxon>Neognathae</taxon>
        <taxon>Neoaves</taxon>
        <taxon>Telluraves</taxon>
        <taxon>Australaves</taxon>
        <taxon>Falconiformes</taxon>
        <taxon>Falconidae</taxon>
        <taxon>Phalcoboenus</taxon>
    </lineage>
</organism>
<protein>
    <recommendedName>
        <fullName>Cytochrome b</fullName>
    </recommendedName>
    <alternativeName>
        <fullName>Complex III subunit 3</fullName>
    </alternativeName>
    <alternativeName>
        <fullName>Complex III subunit III</fullName>
    </alternativeName>
    <alternativeName>
        <fullName>Cytochrome b-c1 complex subunit 3</fullName>
    </alternativeName>
    <alternativeName>
        <fullName>Ubiquinol-cytochrome-c reductase complex cytochrome b subunit</fullName>
    </alternativeName>
</protein>
<geneLocation type="mitochondrion"/>
<keyword id="KW-0249">Electron transport</keyword>
<keyword id="KW-0349">Heme</keyword>
<keyword id="KW-0408">Iron</keyword>
<keyword id="KW-0472">Membrane</keyword>
<keyword id="KW-0479">Metal-binding</keyword>
<keyword id="KW-0496">Mitochondrion</keyword>
<keyword id="KW-0999">Mitochondrion inner membrane</keyword>
<keyword id="KW-0679">Respiratory chain</keyword>
<keyword id="KW-0812">Transmembrane</keyword>
<keyword id="KW-1133">Transmembrane helix</keyword>
<keyword id="KW-0813">Transport</keyword>
<keyword id="KW-0830">Ubiquinone</keyword>
<evidence type="ECO:0000250" key="1"/>
<evidence type="ECO:0000250" key="2">
    <source>
        <dbReference type="UniProtKB" id="P00157"/>
    </source>
</evidence>
<evidence type="ECO:0000255" key="3">
    <source>
        <dbReference type="PROSITE-ProRule" id="PRU00967"/>
    </source>
</evidence>
<evidence type="ECO:0000255" key="4">
    <source>
        <dbReference type="PROSITE-ProRule" id="PRU00968"/>
    </source>
</evidence>
<reference key="1">
    <citation type="journal article" date="1997" name="Mol. Phylogenet. Evol.">
        <title>Correlation of functional domains and rates of nucleotide substitution in cytochrome b.</title>
        <authorList>
            <person name="Griffiths C.S."/>
        </authorList>
    </citation>
    <scope>NUCLEOTIDE SEQUENCE [GENOMIC DNA]</scope>
</reference>
<dbReference type="EMBL" id="U83320">
    <property type="protein sequence ID" value="AAC60241.1"/>
    <property type="molecule type" value="Genomic_DNA"/>
</dbReference>
<dbReference type="SMR" id="O21205"/>
<dbReference type="GO" id="GO:0005743">
    <property type="term" value="C:mitochondrial inner membrane"/>
    <property type="evidence" value="ECO:0007669"/>
    <property type="project" value="UniProtKB-SubCell"/>
</dbReference>
<dbReference type="GO" id="GO:0045275">
    <property type="term" value="C:respiratory chain complex III"/>
    <property type="evidence" value="ECO:0007669"/>
    <property type="project" value="InterPro"/>
</dbReference>
<dbReference type="GO" id="GO:0046872">
    <property type="term" value="F:metal ion binding"/>
    <property type="evidence" value="ECO:0007669"/>
    <property type="project" value="UniProtKB-KW"/>
</dbReference>
<dbReference type="GO" id="GO:0008121">
    <property type="term" value="F:ubiquinol-cytochrome-c reductase activity"/>
    <property type="evidence" value="ECO:0007669"/>
    <property type="project" value="InterPro"/>
</dbReference>
<dbReference type="GO" id="GO:0006122">
    <property type="term" value="P:mitochondrial electron transport, ubiquinol to cytochrome c"/>
    <property type="evidence" value="ECO:0007669"/>
    <property type="project" value="TreeGrafter"/>
</dbReference>
<dbReference type="CDD" id="cd00290">
    <property type="entry name" value="cytochrome_b_C"/>
    <property type="match status" value="1"/>
</dbReference>
<dbReference type="CDD" id="cd00284">
    <property type="entry name" value="Cytochrome_b_N"/>
    <property type="match status" value="1"/>
</dbReference>
<dbReference type="FunFam" id="1.20.810.10:FF:000002">
    <property type="entry name" value="Cytochrome b"/>
    <property type="match status" value="1"/>
</dbReference>
<dbReference type="Gene3D" id="1.20.810.10">
    <property type="entry name" value="Cytochrome Bc1 Complex, Chain C"/>
    <property type="match status" value="1"/>
</dbReference>
<dbReference type="InterPro" id="IPR005798">
    <property type="entry name" value="Cyt_b/b6_C"/>
</dbReference>
<dbReference type="InterPro" id="IPR036150">
    <property type="entry name" value="Cyt_b/b6_C_sf"/>
</dbReference>
<dbReference type="InterPro" id="IPR005797">
    <property type="entry name" value="Cyt_b/b6_N"/>
</dbReference>
<dbReference type="InterPro" id="IPR027387">
    <property type="entry name" value="Cytb/b6-like_sf"/>
</dbReference>
<dbReference type="InterPro" id="IPR030689">
    <property type="entry name" value="Cytochrome_b"/>
</dbReference>
<dbReference type="InterPro" id="IPR048260">
    <property type="entry name" value="Cytochrome_b_C_euk/bac"/>
</dbReference>
<dbReference type="InterPro" id="IPR048259">
    <property type="entry name" value="Cytochrome_b_N_euk/bac"/>
</dbReference>
<dbReference type="InterPro" id="IPR016174">
    <property type="entry name" value="Di-haem_cyt_TM"/>
</dbReference>
<dbReference type="PANTHER" id="PTHR19271">
    <property type="entry name" value="CYTOCHROME B"/>
    <property type="match status" value="1"/>
</dbReference>
<dbReference type="PANTHER" id="PTHR19271:SF16">
    <property type="entry name" value="CYTOCHROME B"/>
    <property type="match status" value="1"/>
</dbReference>
<dbReference type="Pfam" id="PF00032">
    <property type="entry name" value="Cytochrom_B_C"/>
    <property type="match status" value="1"/>
</dbReference>
<dbReference type="Pfam" id="PF00033">
    <property type="entry name" value="Cytochrome_B"/>
    <property type="match status" value="1"/>
</dbReference>
<dbReference type="PIRSF" id="PIRSF038885">
    <property type="entry name" value="COB"/>
    <property type="match status" value="1"/>
</dbReference>
<dbReference type="SUPFAM" id="SSF81648">
    <property type="entry name" value="a domain/subunit of cytochrome bc1 complex (Ubiquinol-cytochrome c reductase)"/>
    <property type="match status" value="1"/>
</dbReference>
<dbReference type="SUPFAM" id="SSF81342">
    <property type="entry name" value="Transmembrane di-heme cytochromes"/>
    <property type="match status" value="1"/>
</dbReference>
<dbReference type="PROSITE" id="PS51003">
    <property type="entry name" value="CYTB_CTER"/>
    <property type="match status" value="1"/>
</dbReference>
<dbReference type="PROSITE" id="PS51002">
    <property type="entry name" value="CYTB_NTER"/>
    <property type="match status" value="1"/>
</dbReference>
<feature type="chain" id="PRO_0000061380" description="Cytochrome b">
    <location>
        <begin position="1"/>
        <end position="380"/>
    </location>
</feature>
<feature type="transmembrane region" description="Helical" evidence="2">
    <location>
        <begin position="34"/>
        <end position="54"/>
    </location>
</feature>
<feature type="transmembrane region" description="Helical" evidence="2">
    <location>
        <begin position="78"/>
        <end position="99"/>
    </location>
</feature>
<feature type="transmembrane region" description="Helical" evidence="2">
    <location>
        <begin position="114"/>
        <end position="134"/>
    </location>
</feature>
<feature type="transmembrane region" description="Helical" evidence="2">
    <location>
        <begin position="179"/>
        <end position="199"/>
    </location>
</feature>
<feature type="transmembrane region" description="Helical" evidence="2">
    <location>
        <begin position="227"/>
        <end position="247"/>
    </location>
</feature>
<feature type="transmembrane region" description="Helical" evidence="2">
    <location>
        <begin position="289"/>
        <end position="309"/>
    </location>
</feature>
<feature type="transmembrane region" description="Helical" evidence="2">
    <location>
        <begin position="321"/>
        <end position="341"/>
    </location>
</feature>
<feature type="transmembrane region" description="Helical" evidence="2">
    <location>
        <begin position="348"/>
        <end position="368"/>
    </location>
</feature>
<feature type="binding site" description="axial binding residue" evidence="2">
    <location>
        <position position="84"/>
    </location>
    <ligand>
        <name>heme b</name>
        <dbReference type="ChEBI" id="CHEBI:60344"/>
        <label>b562</label>
    </ligand>
    <ligandPart>
        <name>Fe</name>
        <dbReference type="ChEBI" id="CHEBI:18248"/>
    </ligandPart>
</feature>
<feature type="binding site" description="axial binding residue" evidence="2">
    <location>
        <position position="98"/>
    </location>
    <ligand>
        <name>heme b</name>
        <dbReference type="ChEBI" id="CHEBI:60344"/>
        <label>b566</label>
    </ligand>
    <ligandPart>
        <name>Fe</name>
        <dbReference type="ChEBI" id="CHEBI:18248"/>
    </ligandPart>
</feature>
<feature type="binding site" description="axial binding residue" evidence="2">
    <location>
        <position position="183"/>
    </location>
    <ligand>
        <name>heme b</name>
        <dbReference type="ChEBI" id="CHEBI:60344"/>
        <label>b562</label>
    </ligand>
    <ligandPart>
        <name>Fe</name>
        <dbReference type="ChEBI" id="CHEBI:18248"/>
    </ligandPart>
</feature>
<feature type="binding site" description="axial binding residue" evidence="2">
    <location>
        <position position="197"/>
    </location>
    <ligand>
        <name>heme b</name>
        <dbReference type="ChEBI" id="CHEBI:60344"/>
        <label>b566</label>
    </ligand>
    <ligandPart>
        <name>Fe</name>
        <dbReference type="ChEBI" id="CHEBI:18248"/>
    </ligandPart>
</feature>
<feature type="binding site" evidence="2">
    <location>
        <position position="202"/>
    </location>
    <ligand>
        <name>a ubiquinone</name>
        <dbReference type="ChEBI" id="CHEBI:16389"/>
    </ligand>
</feature>